<proteinExistence type="inferred from homology"/>
<reference key="1">
    <citation type="journal article" date="2006" name="Mol. Genet. Genomics">
        <title>Distinctive architecture of the chloroplast genome in the chlorophycean green alga Stigeoclonium helveticum.</title>
        <authorList>
            <person name="Belanger A.-S."/>
            <person name="Brouard J.-S."/>
            <person name="Charlebois P."/>
            <person name="Otis C."/>
            <person name="Lemieux C."/>
            <person name="Turmel M."/>
        </authorList>
    </citation>
    <scope>NUCLEOTIDE SEQUENCE [LARGE SCALE GENOMIC DNA]</scope>
    <source>
        <strain>UTEX 441</strain>
    </source>
</reference>
<comment type="function">
    <text evidence="1">May play a role in photosystem I and II biogenesis.</text>
</comment>
<comment type="subcellular location">
    <subcellularLocation>
        <location evidence="1">Plastid</location>
        <location evidence="1">Chloroplast thylakoid membrane</location>
        <topology evidence="1">Single-pass membrane protein</topology>
    </subcellularLocation>
</comment>
<comment type="similarity">
    <text evidence="1">Belongs to the PsbN family.</text>
</comment>
<comment type="caution">
    <text evidence="1">Originally thought to be a component of PSII; based on experiments in Synechocystis, N.tabacum and barley, and its absence from PSII in T.elongatus and T.vulcanus, this is probably not true.</text>
</comment>
<evidence type="ECO:0000255" key="1">
    <source>
        <dbReference type="HAMAP-Rule" id="MF_00293"/>
    </source>
</evidence>
<geneLocation type="chloroplast"/>
<dbReference type="EMBL" id="DQ630521">
    <property type="protein sequence ID" value="ABF60178.1"/>
    <property type="molecule type" value="Genomic_DNA"/>
</dbReference>
<dbReference type="RefSeq" id="YP_764379.1">
    <property type="nucleotide sequence ID" value="NC_008372.1"/>
</dbReference>
<dbReference type="SMR" id="Q06SI7"/>
<dbReference type="GeneID" id="4308358"/>
<dbReference type="GO" id="GO:0009535">
    <property type="term" value="C:chloroplast thylakoid membrane"/>
    <property type="evidence" value="ECO:0007669"/>
    <property type="project" value="UniProtKB-SubCell"/>
</dbReference>
<dbReference type="GO" id="GO:0015979">
    <property type="term" value="P:photosynthesis"/>
    <property type="evidence" value="ECO:0007669"/>
    <property type="project" value="InterPro"/>
</dbReference>
<dbReference type="HAMAP" id="MF_00293">
    <property type="entry name" value="PSII_PsbN"/>
    <property type="match status" value="1"/>
</dbReference>
<dbReference type="InterPro" id="IPR003398">
    <property type="entry name" value="PSII_PsbN"/>
</dbReference>
<dbReference type="PANTHER" id="PTHR35326">
    <property type="entry name" value="PROTEIN PSBN"/>
    <property type="match status" value="1"/>
</dbReference>
<dbReference type="PANTHER" id="PTHR35326:SF3">
    <property type="entry name" value="PROTEIN PSBN"/>
    <property type="match status" value="1"/>
</dbReference>
<dbReference type="Pfam" id="PF02468">
    <property type="entry name" value="PsbN"/>
    <property type="match status" value="1"/>
</dbReference>
<feature type="chain" id="PRO_0000276282" description="Protein PsbN">
    <location>
        <begin position="1"/>
        <end position="44"/>
    </location>
</feature>
<feature type="transmembrane region" description="Helical" evidence="1">
    <location>
        <begin position="6"/>
        <end position="26"/>
    </location>
</feature>
<protein>
    <recommendedName>
        <fullName evidence="1">Protein PsbN</fullName>
    </recommendedName>
</protein>
<gene>
    <name evidence="1" type="primary">psbN</name>
</gene>
<keyword id="KW-0150">Chloroplast</keyword>
<keyword id="KW-0472">Membrane</keyword>
<keyword id="KW-0934">Plastid</keyword>
<keyword id="KW-0793">Thylakoid</keyword>
<keyword id="KW-0812">Transmembrane</keyword>
<keyword id="KW-1133">Transmembrane helix</keyword>
<accession>Q06SI7</accession>
<organism>
    <name type="scientific">Stigeoclonium helveticum</name>
    <name type="common">Green alga</name>
    <dbReference type="NCBI Taxonomy" id="55999"/>
    <lineage>
        <taxon>Eukaryota</taxon>
        <taxon>Viridiplantae</taxon>
        <taxon>Chlorophyta</taxon>
        <taxon>core chlorophytes</taxon>
        <taxon>Chlorophyceae</taxon>
        <taxon>OCC clade</taxon>
        <taxon>Chaetophorales</taxon>
        <taxon>Chaetophoraceae</taxon>
        <taxon>Stigeoclonium</taxon>
    </lineage>
</organism>
<name>PSBN_STIHE</name>
<sequence length="44" mass="5263">MDNPAFFFTIFLWFFLLSITAYSIYVGFGPPSKRLRDPFEEHED</sequence>